<gene>
    <name evidence="1" type="primary">rpsG</name>
    <name type="ordered locus">CPE2409</name>
</gene>
<name>RS7_CLOPE</name>
<accession>Q8XHS0</accession>
<keyword id="KW-1185">Reference proteome</keyword>
<keyword id="KW-0687">Ribonucleoprotein</keyword>
<keyword id="KW-0689">Ribosomal protein</keyword>
<keyword id="KW-0694">RNA-binding</keyword>
<keyword id="KW-0699">rRNA-binding</keyword>
<keyword id="KW-0820">tRNA-binding</keyword>
<sequence length="156" mass="17832">MPRKGHIAKRDVLPDPVYNSKVVTKLINNVMEDGKKGVAQKICYDAFQIINEKTGRDAMEVFEEAMNNIMPLLEVKARRIGGANYQVPIEVRPERRQTLGLRWLLAASRKRGEKYMRERLAGELMDAANNTGAAVKKREDTHKMAEANKAFAHYRY</sequence>
<comment type="function">
    <text evidence="1">One of the primary rRNA binding proteins, it binds directly to 16S rRNA where it nucleates assembly of the head domain of the 30S subunit. Is located at the subunit interface close to the decoding center, probably blocks exit of the E-site tRNA.</text>
</comment>
<comment type="subunit">
    <text evidence="1">Part of the 30S ribosomal subunit. Contacts proteins S9 and S11.</text>
</comment>
<comment type="similarity">
    <text evidence="1">Belongs to the universal ribosomal protein uS7 family.</text>
</comment>
<feature type="chain" id="PRO_0000124250" description="Small ribosomal subunit protein uS7">
    <location>
        <begin position="1"/>
        <end position="156"/>
    </location>
</feature>
<proteinExistence type="inferred from homology"/>
<organism>
    <name type="scientific">Clostridium perfringens (strain 13 / Type A)</name>
    <dbReference type="NCBI Taxonomy" id="195102"/>
    <lineage>
        <taxon>Bacteria</taxon>
        <taxon>Bacillati</taxon>
        <taxon>Bacillota</taxon>
        <taxon>Clostridia</taxon>
        <taxon>Eubacteriales</taxon>
        <taxon>Clostridiaceae</taxon>
        <taxon>Clostridium</taxon>
    </lineage>
</organism>
<evidence type="ECO:0000255" key="1">
    <source>
        <dbReference type="HAMAP-Rule" id="MF_00480"/>
    </source>
</evidence>
<evidence type="ECO:0000305" key="2"/>
<protein>
    <recommendedName>
        <fullName evidence="1">Small ribosomal subunit protein uS7</fullName>
    </recommendedName>
    <alternativeName>
        <fullName evidence="2">30S ribosomal protein S7</fullName>
    </alternativeName>
</protein>
<reference key="1">
    <citation type="journal article" date="2002" name="Proc. Natl. Acad. Sci. U.S.A.">
        <title>Complete genome sequence of Clostridium perfringens, an anaerobic flesh-eater.</title>
        <authorList>
            <person name="Shimizu T."/>
            <person name="Ohtani K."/>
            <person name="Hirakawa H."/>
            <person name="Ohshima K."/>
            <person name="Yamashita A."/>
            <person name="Shiba T."/>
            <person name="Ogasawara N."/>
            <person name="Hattori M."/>
            <person name="Kuhara S."/>
            <person name="Hayashi H."/>
        </authorList>
    </citation>
    <scope>NUCLEOTIDE SEQUENCE [LARGE SCALE GENOMIC DNA]</scope>
    <source>
        <strain>13 / Type A</strain>
    </source>
</reference>
<dbReference type="EMBL" id="BA000016">
    <property type="protein sequence ID" value="BAB82115.1"/>
    <property type="molecule type" value="Genomic_DNA"/>
</dbReference>
<dbReference type="RefSeq" id="WP_003452182.1">
    <property type="nucleotide sequence ID" value="NC_003366.1"/>
</dbReference>
<dbReference type="SMR" id="Q8XHS0"/>
<dbReference type="STRING" id="195102.gene:10491726"/>
<dbReference type="GeneID" id="93001005"/>
<dbReference type="KEGG" id="cpe:CPE2409"/>
<dbReference type="HOGENOM" id="CLU_072226_1_1_9"/>
<dbReference type="Proteomes" id="UP000000818">
    <property type="component" value="Chromosome"/>
</dbReference>
<dbReference type="GO" id="GO:0015935">
    <property type="term" value="C:small ribosomal subunit"/>
    <property type="evidence" value="ECO:0007669"/>
    <property type="project" value="InterPro"/>
</dbReference>
<dbReference type="GO" id="GO:0019843">
    <property type="term" value="F:rRNA binding"/>
    <property type="evidence" value="ECO:0007669"/>
    <property type="project" value="UniProtKB-UniRule"/>
</dbReference>
<dbReference type="GO" id="GO:0003735">
    <property type="term" value="F:structural constituent of ribosome"/>
    <property type="evidence" value="ECO:0007669"/>
    <property type="project" value="InterPro"/>
</dbReference>
<dbReference type="GO" id="GO:0000049">
    <property type="term" value="F:tRNA binding"/>
    <property type="evidence" value="ECO:0007669"/>
    <property type="project" value="UniProtKB-UniRule"/>
</dbReference>
<dbReference type="GO" id="GO:0006412">
    <property type="term" value="P:translation"/>
    <property type="evidence" value="ECO:0007669"/>
    <property type="project" value="UniProtKB-UniRule"/>
</dbReference>
<dbReference type="CDD" id="cd14869">
    <property type="entry name" value="uS7_Bacteria"/>
    <property type="match status" value="1"/>
</dbReference>
<dbReference type="FunFam" id="1.10.455.10:FF:000001">
    <property type="entry name" value="30S ribosomal protein S7"/>
    <property type="match status" value="1"/>
</dbReference>
<dbReference type="Gene3D" id="1.10.455.10">
    <property type="entry name" value="Ribosomal protein S7 domain"/>
    <property type="match status" value="1"/>
</dbReference>
<dbReference type="HAMAP" id="MF_00480_B">
    <property type="entry name" value="Ribosomal_uS7_B"/>
    <property type="match status" value="1"/>
</dbReference>
<dbReference type="InterPro" id="IPR000235">
    <property type="entry name" value="Ribosomal_uS7"/>
</dbReference>
<dbReference type="InterPro" id="IPR005717">
    <property type="entry name" value="Ribosomal_uS7_bac/org-type"/>
</dbReference>
<dbReference type="InterPro" id="IPR020606">
    <property type="entry name" value="Ribosomal_uS7_CS"/>
</dbReference>
<dbReference type="InterPro" id="IPR023798">
    <property type="entry name" value="Ribosomal_uS7_dom"/>
</dbReference>
<dbReference type="InterPro" id="IPR036823">
    <property type="entry name" value="Ribosomal_uS7_dom_sf"/>
</dbReference>
<dbReference type="NCBIfam" id="TIGR01029">
    <property type="entry name" value="rpsG_bact"/>
    <property type="match status" value="1"/>
</dbReference>
<dbReference type="PANTHER" id="PTHR11205">
    <property type="entry name" value="RIBOSOMAL PROTEIN S7"/>
    <property type="match status" value="1"/>
</dbReference>
<dbReference type="Pfam" id="PF00177">
    <property type="entry name" value="Ribosomal_S7"/>
    <property type="match status" value="1"/>
</dbReference>
<dbReference type="PIRSF" id="PIRSF002122">
    <property type="entry name" value="RPS7p_RPS7a_RPS5e_RPS7o"/>
    <property type="match status" value="1"/>
</dbReference>
<dbReference type="SUPFAM" id="SSF47973">
    <property type="entry name" value="Ribosomal protein S7"/>
    <property type="match status" value="1"/>
</dbReference>
<dbReference type="PROSITE" id="PS00052">
    <property type="entry name" value="RIBOSOMAL_S7"/>
    <property type="match status" value="1"/>
</dbReference>